<feature type="signal peptide" evidence="1">
    <location>
        <begin position="1"/>
        <end position="22"/>
    </location>
</feature>
<feature type="chain" id="PRO_0000014026" description="Uncharacterized lipoprotein MG095">
    <location>
        <begin position="23"/>
        <end position="398"/>
    </location>
</feature>
<feature type="lipid moiety-binding region" description="N-palmitoyl cysteine" evidence="1">
    <location>
        <position position="23"/>
    </location>
</feature>
<feature type="lipid moiety-binding region" description="S-diacylglycerol cysteine" evidence="1">
    <location>
        <position position="23"/>
    </location>
</feature>
<reference key="1">
    <citation type="journal article" date="1995" name="Science">
        <title>The minimal gene complement of Mycoplasma genitalium.</title>
        <authorList>
            <person name="Fraser C.M."/>
            <person name="Gocayne J.D."/>
            <person name="White O."/>
            <person name="Adams M.D."/>
            <person name="Clayton R.A."/>
            <person name="Fleischmann R.D."/>
            <person name="Bult C.J."/>
            <person name="Kerlavage A.R."/>
            <person name="Sutton G.G."/>
            <person name="Kelley J.M."/>
            <person name="Fritchman J.L."/>
            <person name="Weidman J.F."/>
            <person name="Small K.V."/>
            <person name="Sandusky M."/>
            <person name="Fuhrmann J.L."/>
            <person name="Nguyen D.T."/>
            <person name="Utterback T.R."/>
            <person name="Saudek D.M."/>
            <person name="Phillips C.A."/>
            <person name="Merrick J.M."/>
            <person name="Tomb J.-F."/>
            <person name="Dougherty B.A."/>
            <person name="Bott K.F."/>
            <person name="Hu P.-C."/>
            <person name="Lucier T.S."/>
            <person name="Peterson S.N."/>
            <person name="Smith H.O."/>
            <person name="Hutchison C.A. III"/>
            <person name="Venter J.C."/>
        </authorList>
    </citation>
    <scope>NUCLEOTIDE SEQUENCE [LARGE SCALE GENOMIC DNA]</scope>
    <source>
        <strain>ATCC 33530 / DSM 19775 / NCTC 10195 / G37</strain>
    </source>
</reference>
<proteinExistence type="inferred from homology"/>
<accession>P47341</accession>
<gene>
    <name type="ordered locus">MG095</name>
</gene>
<sequence length="398" mass="44932">MKLKFYKLPLITTAFSFVFLTACSTPQSSFFLPAQTTISTLKINGMENKTGYFLETQRSRGSYNPTASLTMIKLGDEKEFKNVDTTKQDEVLFANIYGGISSLLNFRIIQPMLTYWNLVNNSLSQIGSTNDLITFKDSGYKDQLAKALANNLIVADEGNNNFWFGLKALKFDTVKLQANNTATSSTRASTTQNTNNKIDAREKITINGNGGTNNDQNATVQKLIGIENIEVEFSFVKTGFNGNEIKFEDYVTDSSPTTSLLKQVWKSKWNTELTHTSFKFKLNSFNVLLTYQLEANQKSQYLPNGFSFLFPSNLEGKIDSSKSYWNNLVDFSKRTTNEENTMLLTDLQKKQDQVNRFVGFIGQNHFTLSANSINEKQFNDASTADFFKAIFQKVSINE</sequence>
<protein>
    <recommendedName>
        <fullName>Uncharacterized lipoprotein MG095</fullName>
    </recommendedName>
</protein>
<name>Y095_MYCGE</name>
<dbReference type="EMBL" id="L43967">
    <property type="protein sequence ID" value="AAC71313.1"/>
    <property type="molecule type" value="Genomic_DNA"/>
</dbReference>
<dbReference type="PIR" id="E64210">
    <property type="entry name" value="E64210"/>
</dbReference>
<dbReference type="RefSeq" id="WP_009885652.1">
    <property type="nucleotide sequence ID" value="NC_000908.2"/>
</dbReference>
<dbReference type="STRING" id="243273.MG_095"/>
<dbReference type="GeneID" id="88282218"/>
<dbReference type="KEGG" id="mge:MG_095"/>
<dbReference type="eggNOG" id="ENOG5030N7N">
    <property type="taxonomic scope" value="Bacteria"/>
</dbReference>
<dbReference type="HOGENOM" id="CLU_692268_0_0_14"/>
<dbReference type="InParanoid" id="P47341"/>
<dbReference type="OrthoDB" id="9963286at2"/>
<dbReference type="BioCyc" id="MGEN243273:G1GJ2-107-MONOMER"/>
<dbReference type="Proteomes" id="UP000000807">
    <property type="component" value="Chromosome"/>
</dbReference>
<dbReference type="GO" id="GO:0005886">
    <property type="term" value="C:plasma membrane"/>
    <property type="evidence" value="ECO:0007669"/>
    <property type="project" value="UniProtKB-SubCell"/>
</dbReference>
<dbReference type="PROSITE" id="PS51257">
    <property type="entry name" value="PROKAR_LIPOPROTEIN"/>
    <property type="match status" value="1"/>
</dbReference>
<comment type="subcellular location">
    <subcellularLocation>
        <location evidence="1">Cell membrane</location>
        <topology evidence="1">Lipid-anchor</topology>
    </subcellularLocation>
</comment>
<organism>
    <name type="scientific">Mycoplasma genitalium (strain ATCC 33530 / DSM 19775 / NCTC 10195 / G37)</name>
    <name type="common">Mycoplasmoides genitalium</name>
    <dbReference type="NCBI Taxonomy" id="243273"/>
    <lineage>
        <taxon>Bacteria</taxon>
        <taxon>Bacillati</taxon>
        <taxon>Mycoplasmatota</taxon>
        <taxon>Mycoplasmoidales</taxon>
        <taxon>Mycoplasmoidaceae</taxon>
        <taxon>Mycoplasmoides</taxon>
    </lineage>
</organism>
<evidence type="ECO:0000255" key="1">
    <source>
        <dbReference type="PROSITE-ProRule" id="PRU00303"/>
    </source>
</evidence>
<keyword id="KW-1003">Cell membrane</keyword>
<keyword id="KW-0449">Lipoprotein</keyword>
<keyword id="KW-0472">Membrane</keyword>
<keyword id="KW-0564">Palmitate</keyword>
<keyword id="KW-1185">Reference proteome</keyword>
<keyword id="KW-0732">Signal</keyword>